<organism>
    <name type="scientific">Bacillus anthracis</name>
    <dbReference type="NCBI Taxonomy" id="1392"/>
    <lineage>
        <taxon>Bacteria</taxon>
        <taxon>Bacillati</taxon>
        <taxon>Bacillota</taxon>
        <taxon>Bacilli</taxon>
        <taxon>Bacillales</taxon>
        <taxon>Bacillaceae</taxon>
        <taxon>Bacillus</taxon>
        <taxon>Bacillus cereus group</taxon>
    </lineage>
</organism>
<proteinExistence type="inferred from homology"/>
<gene>
    <name type="ordered locus">BA_5440</name>
    <name type="ordered locus">GBAA_5440</name>
    <name type="ordered locus">BAS5055</name>
</gene>
<name>YDJC_BACAN</name>
<dbReference type="EC" id="3.5.1.-" evidence="1"/>
<dbReference type="EMBL" id="AE016879">
    <property type="protein sequence ID" value="AAP29094.1"/>
    <property type="molecule type" value="Genomic_DNA"/>
</dbReference>
<dbReference type="EMBL" id="AE017334">
    <property type="protein sequence ID" value="AAT34578.1"/>
    <property type="molecule type" value="Genomic_DNA"/>
</dbReference>
<dbReference type="EMBL" id="AE017225">
    <property type="protein sequence ID" value="AAT57344.1"/>
    <property type="molecule type" value="Genomic_DNA"/>
</dbReference>
<dbReference type="RefSeq" id="NP_847608.1">
    <property type="nucleotide sequence ID" value="NC_003997.3"/>
</dbReference>
<dbReference type="RefSeq" id="YP_031294.1">
    <property type="nucleotide sequence ID" value="NC_005945.1"/>
</dbReference>
<dbReference type="SMR" id="P59744"/>
<dbReference type="STRING" id="261594.GBAA_5440"/>
<dbReference type="DNASU" id="1085045"/>
<dbReference type="GeneID" id="45025038"/>
<dbReference type="KEGG" id="ban:BA_5440"/>
<dbReference type="KEGG" id="banh:HYU01_26570"/>
<dbReference type="KEGG" id="bar:GBAA_5440"/>
<dbReference type="KEGG" id="bat:BAS5055"/>
<dbReference type="PATRIC" id="fig|198094.11.peg.5399"/>
<dbReference type="eggNOG" id="COG3394">
    <property type="taxonomic scope" value="Bacteria"/>
</dbReference>
<dbReference type="HOGENOM" id="CLU_064244_4_0_9"/>
<dbReference type="OMA" id="DHIDSHH"/>
<dbReference type="OrthoDB" id="9774177at2"/>
<dbReference type="Proteomes" id="UP000000427">
    <property type="component" value="Chromosome"/>
</dbReference>
<dbReference type="Proteomes" id="UP000000594">
    <property type="component" value="Chromosome"/>
</dbReference>
<dbReference type="GO" id="GO:0019213">
    <property type="term" value="F:deacetylase activity"/>
    <property type="evidence" value="ECO:0007669"/>
    <property type="project" value="TreeGrafter"/>
</dbReference>
<dbReference type="GO" id="GO:0016811">
    <property type="term" value="F:hydrolase activity, acting on carbon-nitrogen (but not peptide) bonds, in linear amides"/>
    <property type="evidence" value="ECO:0007669"/>
    <property type="project" value="UniProtKB-UniRule"/>
</dbReference>
<dbReference type="GO" id="GO:0046872">
    <property type="term" value="F:metal ion binding"/>
    <property type="evidence" value="ECO:0007669"/>
    <property type="project" value="UniProtKB-KW"/>
</dbReference>
<dbReference type="GO" id="GO:0000272">
    <property type="term" value="P:polysaccharide catabolic process"/>
    <property type="evidence" value="ECO:0007669"/>
    <property type="project" value="InterPro"/>
</dbReference>
<dbReference type="CDD" id="cd10803">
    <property type="entry name" value="YdjC_EF3048_like"/>
    <property type="match status" value="1"/>
</dbReference>
<dbReference type="FunFam" id="3.20.20.370:FF:000011">
    <property type="entry name" value="Carbohydrate deacetylase"/>
    <property type="match status" value="1"/>
</dbReference>
<dbReference type="Gene3D" id="3.20.20.370">
    <property type="entry name" value="Glycoside hydrolase/deacetylase"/>
    <property type="match status" value="1"/>
</dbReference>
<dbReference type="HAMAP" id="MF_01246">
    <property type="entry name" value="COD"/>
    <property type="match status" value="1"/>
</dbReference>
<dbReference type="InterPro" id="IPR022948">
    <property type="entry name" value="COD_ChbG_bac"/>
</dbReference>
<dbReference type="InterPro" id="IPR011330">
    <property type="entry name" value="Glyco_hydro/deAcase_b/a-brl"/>
</dbReference>
<dbReference type="InterPro" id="IPR006879">
    <property type="entry name" value="YdjC-like"/>
</dbReference>
<dbReference type="NCBIfam" id="NF002559">
    <property type="entry name" value="PRK02134.1"/>
    <property type="match status" value="1"/>
</dbReference>
<dbReference type="PANTHER" id="PTHR31609:SF1">
    <property type="entry name" value="CARBOHYDRATE DEACETYLASE"/>
    <property type="match status" value="1"/>
</dbReference>
<dbReference type="PANTHER" id="PTHR31609">
    <property type="entry name" value="YDJC DEACETYLASE FAMILY MEMBER"/>
    <property type="match status" value="1"/>
</dbReference>
<dbReference type="Pfam" id="PF04794">
    <property type="entry name" value="YdjC"/>
    <property type="match status" value="1"/>
</dbReference>
<dbReference type="SUPFAM" id="SSF88713">
    <property type="entry name" value="Glycoside hydrolase/deacetylase"/>
    <property type="match status" value="1"/>
</dbReference>
<comment type="function">
    <text evidence="1">Probably catalyzes the deacetylation of acetylated carbohydrates an important step in the degradation of oligosaccharides.</text>
</comment>
<comment type="cofactor">
    <cofactor evidence="1">
        <name>Mg(2+)</name>
        <dbReference type="ChEBI" id="CHEBI:18420"/>
    </cofactor>
</comment>
<comment type="similarity">
    <text evidence="1">Belongs to the YdjC deacetylase family.</text>
</comment>
<protein>
    <recommendedName>
        <fullName evidence="1">Carbohydrate deacetylase</fullName>
        <ecNumber evidence="1">3.5.1.-</ecNumber>
    </recommendedName>
</protein>
<feature type="chain" id="PRO_0000051584" description="Carbohydrate deacetylase">
    <location>
        <begin position="1"/>
        <end position="234"/>
    </location>
</feature>
<feature type="binding site" evidence="1">
    <location>
        <position position="60"/>
    </location>
    <ligand>
        <name>Mg(2+)</name>
        <dbReference type="ChEBI" id="CHEBI:18420"/>
    </ligand>
</feature>
<feature type="binding site" evidence="1">
    <location>
        <position position="123"/>
    </location>
    <ligand>
        <name>Mg(2+)</name>
        <dbReference type="ChEBI" id="CHEBI:18420"/>
    </ligand>
</feature>
<sequence>MIKLIVNADDFGLTEGTNYGIIDGHINGLVNSTTMMMNMPGTEHAVHLAKEYKTLGVGVHLVLTAGKPLLGDVPSLVSSDGLFHKQSVVWEGKVNPEEVEREWTAQIEKFLSYGLKPTHLDSHHHVHGLPILHDVLERLAATYNVPIRRCEEERAVRPFSDLFYSDFYADGVTEDYFVKLKERVQGEQTVEIMVHPAYIDPELVKRSSYVMDRVKELRILTESELPEGIELVKF</sequence>
<keyword id="KW-0119">Carbohydrate metabolism</keyword>
<keyword id="KW-0378">Hydrolase</keyword>
<keyword id="KW-0460">Magnesium</keyword>
<keyword id="KW-0479">Metal-binding</keyword>
<keyword id="KW-1185">Reference proteome</keyword>
<accession>P59744</accession>
<accession>Q6HQU4</accession>
<accession>Q6KK64</accession>
<evidence type="ECO:0000255" key="1">
    <source>
        <dbReference type="HAMAP-Rule" id="MF_01246"/>
    </source>
</evidence>
<reference key="1">
    <citation type="journal article" date="2003" name="Nature">
        <title>The genome sequence of Bacillus anthracis Ames and comparison to closely related bacteria.</title>
        <authorList>
            <person name="Read T.D."/>
            <person name="Peterson S.N."/>
            <person name="Tourasse N.J."/>
            <person name="Baillie L.W."/>
            <person name="Paulsen I.T."/>
            <person name="Nelson K.E."/>
            <person name="Tettelin H."/>
            <person name="Fouts D.E."/>
            <person name="Eisen J.A."/>
            <person name="Gill S.R."/>
            <person name="Holtzapple E.K."/>
            <person name="Okstad O.A."/>
            <person name="Helgason E."/>
            <person name="Rilstone J."/>
            <person name="Wu M."/>
            <person name="Kolonay J.F."/>
            <person name="Beanan M.J."/>
            <person name="Dodson R.J."/>
            <person name="Brinkac L.M."/>
            <person name="Gwinn M.L."/>
            <person name="DeBoy R.T."/>
            <person name="Madpu R."/>
            <person name="Daugherty S.C."/>
            <person name="Durkin A.S."/>
            <person name="Haft D.H."/>
            <person name="Nelson W.C."/>
            <person name="Peterson J.D."/>
            <person name="Pop M."/>
            <person name="Khouri H.M."/>
            <person name="Radune D."/>
            <person name="Benton J.L."/>
            <person name="Mahamoud Y."/>
            <person name="Jiang L."/>
            <person name="Hance I.R."/>
            <person name="Weidman J.F."/>
            <person name="Berry K.J."/>
            <person name="Plaut R.D."/>
            <person name="Wolf A.M."/>
            <person name="Watkins K.L."/>
            <person name="Nierman W.C."/>
            <person name="Hazen A."/>
            <person name="Cline R.T."/>
            <person name="Redmond C."/>
            <person name="Thwaite J.E."/>
            <person name="White O."/>
            <person name="Salzberg S.L."/>
            <person name="Thomason B."/>
            <person name="Friedlander A.M."/>
            <person name="Koehler T.M."/>
            <person name="Hanna P.C."/>
            <person name="Kolstoe A.-B."/>
            <person name="Fraser C.M."/>
        </authorList>
    </citation>
    <scope>NUCLEOTIDE SEQUENCE [LARGE SCALE GENOMIC DNA]</scope>
    <source>
        <strain>Ames / isolate Porton</strain>
    </source>
</reference>
<reference key="2">
    <citation type="journal article" date="2009" name="J. Bacteriol.">
        <title>The complete genome sequence of Bacillus anthracis Ames 'Ancestor'.</title>
        <authorList>
            <person name="Ravel J."/>
            <person name="Jiang L."/>
            <person name="Stanley S.T."/>
            <person name="Wilson M.R."/>
            <person name="Decker R.S."/>
            <person name="Read T.D."/>
            <person name="Worsham P."/>
            <person name="Keim P.S."/>
            <person name="Salzberg S.L."/>
            <person name="Fraser-Liggett C.M."/>
            <person name="Rasko D.A."/>
        </authorList>
    </citation>
    <scope>NUCLEOTIDE SEQUENCE [LARGE SCALE GENOMIC DNA]</scope>
    <source>
        <strain>Ames ancestor</strain>
    </source>
</reference>
<reference key="3">
    <citation type="submission" date="2004-01" db="EMBL/GenBank/DDBJ databases">
        <title>Complete genome sequence of Bacillus anthracis Sterne.</title>
        <authorList>
            <person name="Brettin T.S."/>
            <person name="Bruce D."/>
            <person name="Challacombe J.F."/>
            <person name="Gilna P."/>
            <person name="Han C."/>
            <person name="Hill K."/>
            <person name="Hitchcock P."/>
            <person name="Jackson P."/>
            <person name="Keim P."/>
            <person name="Longmire J."/>
            <person name="Lucas S."/>
            <person name="Okinaka R."/>
            <person name="Richardson P."/>
            <person name="Rubin E."/>
            <person name="Tice H."/>
        </authorList>
    </citation>
    <scope>NUCLEOTIDE SEQUENCE [LARGE SCALE GENOMIC DNA]</scope>
    <source>
        <strain>Sterne</strain>
    </source>
</reference>